<organism>
    <name type="scientific">Staphylococcus aureus (strain bovine RF122 / ET3-1)</name>
    <dbReference type="NCBI Taxonomy" id="273036"/>
    <lineage>
        <taxon>Bacteria</taxon>
        <taxon>Bacillati</taxon>
        <taxon>Bacillota</taxon>
        <taxon>Bacilli</taxon>
        <taxon>Bacillales</taxon>
        <taxon>Staphylococcaceae</taxon>
        <taxon>Staphylococcus</taxon>
    </lineage>
</organism>
<proteinExistence type="inferred from homology"/>
<comment type="function">
    <text evidence="2">Catalyzes two reactions in de novo purine nucleotide biosynthesis. Catalyzes the breakdown of 5-aminoimidazole- (N-succinylocarboxamide) ribotide (SAICAR or 2-[5-amino-1-(5-phospho-beta-D-ribosyl)imidazole-4-carboxamido]succinate) to 5-aminoimidazole-4-carboxamide ribotide (AICAR or 5-amino-1-(5-phospho-beta-D-ribosyl)imidazole-4-carboxamide) and fumarate, and of adenylosuccinate (ADS or N(6)-(1,2-dicarboxyethyl)-AMP) to adenosine monophosphate (AMP) and fumarate.</text>
</comment>
<comment type="catalytic activity">
    <reaction evidence="2">
        <text>N(6)-(1,2-dicarboxyethyl)-AMP = fumarate + AMP</text>
        <dbReference type="Rhea" id="RHEA:16853"/>
        <dbReference type="ChEBI" id="CHEBI:29806"/>
        <dbReference type="ChEBI" id="CHEBI:57567"/>
        <dbReference type="ChEBI" id="CHEBI:456215"/>
        <dbReference type="EC" id="4.3.2.2"/>
    </reaction>
    <physiologicalReaction direction="left-to-right" evidence="2">
        <dbReference type="Rhea" id="RHEA:16854"/>
    </physiologicalReaction>
</comment>
<comment type="catalytic activity">
    <reaction evidence="2">
        <text>(2S)-2-[5-amino-1-(5-phospho-beta-D-ribosyl)imidazole-4-carboxamido]succinate = 5-amino-1-(5-phospho-beta-D-ribosyl)imidazole-4-carboxamide + fumarate</text>
        <dbReference type="Rhea" id="RHEA:23920"/>
        <dbReference type="ChEBI" id="CHEBI:29806"/>
        <dbReference type="ChEBI" id="CHEBI:58443"/>
        <dbReference type="ChEBI" id="CHEBI:58475"/>
        <dbReference type="EC" id="4.3.2.2"/>
    </reaction>
    <physiologicalReaction direction="left-to-right" evidence="2">
        <dbReference type="Rhea" id="RHEA:23921"/>
    </physiologicalReaction>
</comment>
<comment type="pathway">
    <text>Purine metabolism; AMP biosynthesis via de novo pathway; AMP from IMP: step 2/2.</text>
</comment>
<comment type="pathway">
    <text>Purine metabolism; IMP biosynthesis via de novo pathway; 5-amino-1-(5-phospho-D-ribosyl)imidazole-4-carboxamide from 5-amino-1-(5-phospho-D-ribosyl)imidazole-4-carboxylate: step 2/2.</text>
</comment>
<comment type="subunit">
    <text evidence="1">Homodimer and homotetramer. Residues from neighboring subunits contribute catalytic and substrate-binding residues to each active site (By similarity).</text>
</comment>
<comment type="similarity">
    <text evidence="3">Belongs to the lyase 1 family. Adenylosuccinate lyase subfamily.</text>
</comment>
<sequence length="431" mass="49603">MIERYSREEMSNIWTDQNRYEAWLEVEILACEAWSELGHIPKADVQKIRQNAKVNVERAQEIEQETRHDVVAFTRQVSETLGEERKWVHYGLTSTDVVDTALSFVIKQANDIIEKDLERFIDVLAEKAKNYKYTLMMGRTHGVHAEPTTFGVKMALWYTEMQRNLQRFKQVREEIEVGKMSGAVGTFANIPPEIESYVCKHLGIGTAPVSTQTLQRDRHAYYIATLALIATSLEKFAVEIRNLQKTETREVEEAFAKGQKGSSAMPHKRNPIGSENITGISRVIRGYITTAYENVPLWHERDISHSSAERIMLPDVTIALDYALNRFTNIVDRLTVFEDNMRNNIDKTFGLIFSQRVLLALINKGMVREEAYDKVQPKAMISWETKTPFRELIEQDESITSVLTKEELDECFDPKHHLNQVDTIFERAGLA</sequence>
<gene>
    <name type="primary">purB</name>
    <name type="ordered locus">SAB1843c</name>
</gene>
<feature type="chain" id="PRO_0000259973" description="Adenylosuccinate lyase">
    <location>
        <begin position="1"/>
        <end position="431"/>
    </location>
</feature>
<feature type="active site" description="Proton donor/acceptor" evidence="2">
    <location>
        <position position="141"/>
    </location>
</feature>
<feature type="active site" description="Proton donor/acceptor" evidence="2">
    <location>
        <position position="262"/>
    </location>
</feature>
<feature type="binding site" evidence="2">
    <location>
        <begin position="4"/>
        <end position="5"/>
    </location>
    <ligand>
        <name>N(6)-(1,2-dicarboxyethyl)-AMP</name>
        <dbReference type="ChEBI" id="CHEBI:57567"/>
    </ligand>
</feature>
<feature type="binding site" evidence="2">
    <location>
        <begin position="67"/>
        <end position="69"/>
    </location>
    <ligand>
        <name>N(6)-(1,2-dicarboxyethyl)-AMP</name>
        <dbReference type="ChEBI" id="CHEBI:57567"/>
    </ligand>
</feature>
<feature type="binding site" evidence="2">
    <location>
        <begin position="93"/>
        <end position="94"/>
    </location>
    <ligand>
        <name>N(6)-(1,2-dicarboxyethyl)-AMP</name>
        <dbReference type="ChEBI" id="CHEBI:57567"/>
    </ligand>
</feature>
<feature type="binding site" evidence="2">
    <location>
        <position position="212"/>
    </location>
    <ligand>
        <name>N(6)-(1,2-dicarboxyethyl)-AMP</name>
        <dbReference type="ChEBI" id="CHEBI:57567"/>
    </ligand>
</feature>
<feature type="binding site" evidence="2">
    <location>
        <position position="263"/>
    </location>
    <ligand>
        <name>N(6)-(1,2-dicarboxyethyl)-AMP</name>
        <dbReference type="ChEBI" id="CHEBI:57567"/>
    </ligand>
</feature>
<feature type="binding site" evidence="2">
    <location>
        <begin position="268"/>
        <end position="270"/>
    </location>
    <ligand>
        <name>N(6)-(1,2-dicarboxyethyl)-AMP</name>
        <dbReference type="ChEBI" id="CHEBI:57567"/>
    </ligand>
</feature>
<feature type="binding site" evidence="2">
    <location>
        <position position="276"/>
    </location>
    <ligand>
        <name>N(6)-(1,2-dicarboxyethyl)-AMP</name>
        <dbReference type="ChEBI" id="CHEBI:57567"/>
    </ligand>
</feature>
<feature type="binding site" evidence="2">
    <location>
        <begin position="307"/>
        <end position="311"/>
    </location>
    <ligand>
        <name>N(6)-(1,2-dicarboxyethyl)-AMP</name>
        <dbReference type="ChEBI" id="CHEBI:57567"/>
    </ligand>
</feature>
<dbReference type="EC" id="4.3.2.2" evidence="2"/>
<dbReference type="EMBL" id="AJ938182">
    <property type="protein sequence ID" value="CAI81532.1"/>
    <property type="molecule type" value="Genomic_DNA"/>
</dbReference>
<dbReference type="RefSeq" id="WP_000572878.1">
    <property type="nucleotide sequence ID" value="NC_007622.1"/>
</dbReference>
<dbReference type="SMR" id="Q2YU66"/>
<dbReference type="KEGG" id="sab:SAB1843c"/>
<dbReference type="HOGENOM" id="CLU_030949_0_1_9"/>
<dbReference type="UniPathway" id="UPA00074">
    <property type="reaction ID" value="UER00132"/>
</dbReference>
<dbReference type="UniPathway" id="UPA00075">
    <property type="reaction ID" value="UER00336"/>
</dbReference>
<dbReference type="GO" id="GO:0005829">
    <property type="term" value="C:cytosol"/>
    <property type="evidence" value="ECO:0007669"/>
    <property type="project" value="TreeGrafter"/>
</dbReference>
<dbReference type="GO" id="GO:0070626">
    <property type="term" value="F:(S)-2-(5-amino-1-(5-phospho-D-ribosyl)imidazole-4-carboxamido) succinate lyase (fumarate-forming) activity"/>
    <property type="evidence" value="ECO:0007669"/>
    <property type="project" value="TreeGrafter"/>
</dbReference>
<dbReference type="GO" id="GO:0004018">
    <property type="term" value="F:N6-(1,2-dicarboxyethyl)AMP AMP-lyase (fumarate-forming) activity"/>
    <property type="evidence" value="ECO:0007669"/>
    <property type="project" value="InterPro"/>
</dbReference>
<dbReference type="GO" id="GO:0044208">
    <property type="term" value="P:'de novo' AMP biosynthetic process"/>
    <property type="evidence" value="ECO:0007669"/>
    <property type="project" value="UniProtKB-UniPathway"/>
</dbReference>
<dbReference type="GO" id="GO:0006189">
    <property type="term" value="P:'de novo' IMP biosynthetic process"/>
    <property type="evidence" value="ECO:0007669"/>
    <property type="project" value="UniProtKB-UniPathway"/>
</dbReference>
<dbReference type="CDD" id="cd01360">
    <property type="entry name" value="Adenylsuccinate_lyase_1"/>
    <property type="match status" value="1"/>
</dbReference>
<dbReference type="FunFam" id="1.10.275.10:FF:000006">
    <property type="entry name" value="Adenylosuccinate lyase"/>
    <property type="match status" value="1"/>
</dbReference>
<dbReference type="FunFam" id="1.10.40.30:FF:000007">
    <property type="entry name" value="Adenylosuccinate lyase"/>
    <property type="match status" value="1"/>
</dbReference>
<dbReference type="FunFam" id="1.20.200.10:FF:000008">
    <property type="entry name" value="Adenylosuccinate lyase"/>
    <property type="match status" value="1"/>
</dbReference>
<dbReference type="Gene3D" id="1.10.40.30">
    <property type="entry name" value="Fumarase/aspartase (C-terminal domain)"/>
    <property type="match status" value="1"/>
</dbReference>
<dbReference type="Gene3D" id="1.20.200.10">
    <property type="entry name" value="Fumarase/aspartase (Central domain)"/>
    <property type="match status" value="1"/>
</dbReference>
<dbReference type="Gene3D" id="1.10.275.10">
    <property type="entry name" value="Fumarase/aspartase (N-terminal domain)"/>
    <property type="match status" value="1"/>
</dbReference>
<dbReference type="InterPro" id="IPR019468">
    <property type="entry name" value="AdenyloSucc_lyase_C"/>
</dbReference>
<dbReference type="InterPro" id="IPR024083">
    <property type="entry name" value="Fumarase/histidase_N"/>
</dbReference>
<dbReference type="InterPro" id="IPR020557">
    <property type="entry name" value="Fumarate_lyase_CS"/>
</dbReference>
<dbReference type="InterPro" id="IPR000362">
    <property type="entry name" value="Fumarate_lyase_fam"/>
</dbReference>
<dbReference type="InterPro" id="IPR022761">
    <property type="entry name" value="Fumarate_lyase_N"/>
</dbReference>
<dbReference type="InterPro" id="IPR008948">
    <property type="entry name" value="L-Aspartase-like"/>
</dbReference>
<dbReference type="InterPro" id="IPR004769">
    <property type="entry name" value="Pur_lyase"/>
</dbReference>
<dbReference type="NCBIfam" id="TIGR00928">
    <property type="entry name" value="purB"/>
    <property type="match status" value="1"/>
</dbReference>
<dbReference type="PANTHER" id="PTHR43172">
    <property type="entry name" value="ADENYLOSUCCINATE LYASE"/>
    <property type="match status" value="1"/>
</dbReference>
<dbReference type="PANTHER" id="PTHR43172:SF1">
    <property type="entry name" value="ADENYLOSUCCINATE LYASE"/>
    <property type="match status" value="1"/>
</dbReference>
<dbReference type="Pfam" id="PF10397">
    <property type="entry name" value="ADSL_C"/>
    <property type="match status" value="1"/>
</dbReference>
<dbReference type="Pfam" id="PF00206">
    <property type="entry name" value="Lyase_1"/>
    <property type="match status" value="1"/>
</dbReference>
<dbReference type="PRINTS" id="PR00145">
    <property type="entry name" value="ARGSUCLYASE"/>
</dbReference>
<dbReference type="PRINTS" id="PR00149">
    <property type="entry name" value="FUMRATELYASE"/>
</dbReference>
<dbReference type="SMART" id="SM00998">
    <property type="entry name" value="ADSL_C"/>
    <property type="match status" value="1"/>
</dbReference>
<dbReference type="SUPFAM" id="SSF48557">
    <property type="entry name" value="L-aspartase-like"/>
    <property type="match status" value="1"/>
</dbReference>
<dbReference type="PROSITE" id="PS00163">
    <property type="entry name" value="FUMARATE_LYASES"/>
    <property type="match status" value="1"/>
</dbReference>
<accession>Q2YU66</accession>
<protein>
    <recommendedName>
        <fullName>Adenylosuccinate lyase</fullName>
        <shortName>ASL</shortName>
        <ecNumber evidence="2">4.3.2.2</ecNumber>
    </recommendedName>
    <alternativeName>
        <fullName>Adenylosuccinase</fullName>
        <shortName>ASase</shortName>
    </alternativeName>
</protein>
<name>PUR8_STAAB</name>
<evidence type="ECO:0000250" key="1"/>
<evidence type="ECO:0000250" key="2">
    <source>
        <dbReference type="UniProtKB" id="P0AB89"/>
    </source>
</evidence>
<evidence type="ECO:0000305" key="3"/>
<keyword id="KW-0456">Lyase</keyword>
<keyword id="KW-0658">Purine biosynthesis</keyword>
<reference key="1">
    <citation type="journal article" date="2007" name="PLoS ONE">
        <title>Molecular correlates of host specialization in Staphylococcus aureus.</title>
        <authorList>
            <person name="Herron-Olson L."/>
            <person name="Fitzgerald J.R."/>
            <person name="Musser J.M."/>
            <person name="Kapur V."/>
        </authorList>
    </citation>
    <scope>NUCLEOTIDE SEQUENCE [LARGE SCALE GENOMIC DNA]</scope>
    <source>
        <strain>bovine RF122 / ET3-1</strain>
    </source>
</reference>